<keyword id="KW-0067">ATP-binding</keyword>
<keyword id="KW-0315">Glutamine amidotransferase</keyword>
<keyword id="KW-0332">GMP biosynthesis</keyword>
<keyword id="KW-0436">Ligase</keyword>
<keyword id="KW-0547">Nucleotide-binding</keyword>
<keyword id="KW-0658">Purine biosynthesis</keyword>
<keyword id="KW-1185">Reference proteome</keyword>
<proteinExistence type="inferred from homology"/>
<accession>Q63T42</accession>
<feature type="chain" id="PRO_0000229412" description="GMP synthase [glutamine-hydrolyzing]">
    <location>
        <begin position="1"/>
        <end position="547"/>
    </location>
</feature>
<feature type="domain" description="Glutamine amidotransferase type-1" evidence="1">
    <location>
        <begin position="12"/>
        <end position="210"/>
    </location>
</feature>
<feature type="domain" description="GMPS ATP-PPase" evidence="1">
    <location>
        <begin position="211"/>
        <end position="403"/>
    </location>
</feature>
<feature type="active site" description="Nucleophile" evidence="1">
    <location>
        <position position="89"/>
    </location>
</feature>
<feature type="active site" evidence="1">
    <location>
        <position position="184"/>
    </location>
</feature>
<feature type="active site" evidence="1">
    <location>
        <position position="186"/>
    </location>
</feature>
<feature type="binding site" evidence="1">
    <location>
        <begin position="238"/>
        <end position="244"/>
    </location>
    <ligand>
        <name>ATP</name>
        <dbReference type="ChEBI" id="CHEBI:30616"/>
    </ligand>
</feature>
<dbReference type="EC" id="6.3.5.2" evidence="1"/>
<dbReference type="EMBL" id="BX571965">
    <property type="protein sequence ID" value="CAH36130.1"/>
    <property type="molecule type" value="Genomic_DNA"/>
</dbReference>
<dbReference type="RefSeq" id="YP_108724.1">
    <property type="nucleotide sequence ID" value="NC_006350.1"/>
</dbReference>
<dbReference type="SMR" id="Q63T42"/>
<dbReference type="STRING" id="272560.BPSL2127"/>
<dbReference type="MEROPS" id="C26.957"/>
<dbReference type="KEGG" id="bps:BPSL2127"/>
<dbReference type="PATRIC" id="fig|272560.6.peg.2416"/>
<dbReference type="eggNOG" id="COG0518">
    <property type="taxonomic scope" value="Bacteria"/>
</dbReference>
<dbReference type="eggNOG" id="COG0519">
    <property type="taxonomic scope" value="Bacteria"/>
</dbReference>
<dbReference type="UniPathway" id="UPA00189">
    <property type="reaction ID" value="UER00296"/>
</dbReference>
<dbReference type="Proteomes" id="UP000000605">
    <property type="component" value="Chromosome 1"/>
</dbReference>
<dbReference type="GO" id="GO:0005829">
    <property type="term" value="C:cytosol"/>
    <property type="evidence" value="ECO:0007669"/>
    <property type="project" value="TreeGrafter"/>
</dbReference>
<dbReference type="GO" id="GO:0005524">
    <property type="term" value="F:ATP binding"/>
    <property type="evidence" value="ECO:0007669"/>
    <property type="project" value="UniProtKB-UniRule"/>
</dbReference>
<dbReference type="GO" id="GO:0003921">
    <property type="term" value="F:GMP synthase activity"/>
    <property type="evidence" value="ECO:0007669"/>
    <property type="project" value="InterPro"/>
</dbReference>
<dbReference type="CDD" id="cd01742">
    <property type="entry name" value="GATase1_GMP_Synthase"/>
    <property type="match status" value="1"/>
</dbReference>
<dbReference type="CDD" id="cd01997">
    <property type="entry name" value="GMP_synthase_C"/>
    <property type="match status" value="1"/>
</dbReference>
<dbReference type="FunFam" id="3.30.300.10:FF:000002">
    <property type="entry name" value="GMP synthase [glutamine-hydrolyzing]"/>
    <property type="match status" value="1"/>
</dbReference>
<dbReference type="FunFam" id="3.40.50.620:FF:000001">
    <property type="entry name" value="GMP synthase [glutamine-hydrolyzing]"/>
    <property type="match status" value="1"/>
</dbReference>
<dbReference type="FunFam" id="3.40.50.880:FF:000001">
    <property type="entry name" value="GMP synthase [glutamine-hydrolyzing]"/>
    <property type="match status" value="1"/>
</dbReference>
<dbReference type="Gene3D" id="3.30.300.10">
    <property type="match status" value="1"/>
</dbReference>
<dbReference type="Gene3D" id="3.40.50.880">
    <property type="match status" value="1"/>
</dbReference>
<dbReference type="Gene3D" id="3.40.50.620">
    <property type="entry name" value="HUPs"/>
    <property type="match status" value="1"/>
</dbReference>
<dbReference type="HAMAP" id="MF_00344">
    <property type="entry name" value="GMP_synthase"/>
    <property type="match status" value="1"/>
</dbReference>
<dbReference type="InterPro" id="IPR029062">
    <property type="entry name" value="Class_I_gatase-like"/>
</dbReference>
<dbReference type="InterPro" id="IPR017926">
    <property type="entry name" value="GATASE"/>
</dbReference>
<dbReference type="InterPro" id="IPR001674">
    <property type="entry name" value="GMP_synth_C"/>
</dbReference>
<dbReference type="InterPro" id="IPR004739">
    <property type="entry name" value="GMP_synth_GATase"/>
</dbReference>
<dbReference type="InterPro" id="IPR022955">
    <property type="entry name" value="GMP_synthase"/>
</dbReference>
<dbReference type="InterPro" id="IPR025777">
    <property type="entry name" value="GMPS_ATP_PPase_dom"/>
</dbReference>
<dbReference type="InterPro" id="IPR022310">
    <property type="entry name" value="NAD/GMP_synthase"/>
</dbReference>
<dbReference type="InterPro" id="IPR014729">
    <property type="entry name" value="Rossmann-like_a/b/a_fold"/>
</dbReference>
<dbReference type="NCBIfam" id="TIGR00884">
    <property type="entry name" value="guaA_Cterm"/>
    <property type="match status" value="1"/>
</dbReference>
<dbReference type="NCBIfam" id="TIGR00888">
    <property type="entry name" value="guaA_Nterm"/>
    <property type="match status" value="1"/>
</dbReference>
<dbReference type="NCBIfam" id="NF000848">
    <property type="entry name" value="PRK00074.1"/>
    <property type="match status" value="1"/>
</dbReference>
<dbReference type="PANTHER" id="PTHR11922:SF2">
    <property type="entry name" value="GMP SYNTHASE [GLUTAMINE-HYDROLYZING]"/>
    <property type="match status" value="1"/>
</dbReference>
<dbReference type="PANTHER" id="PTHR11922">
    <property type="entry name" value="GMP SYNTHASE-RELATED"/>
    <property type="match status" value="1"/>
</dbReference>
<dbReference type="Pfam" id="PF00117">
    <property type="entry name" value="GATase"/>
    <property type="match status" value="1"/>
</dbReference>
<dbReference type="Pfam" id="PF00958">
    <property type="entry name" value="GMP_synt_C"/>
    <property type="match status" value="1"/>
</dbReference>
<dbReference type="Pfam" id="PF02540">
    <property type="entry name" value="NAD_synthase"/>
    <property type="match status" value="1"/>
</dbReference>
<dbReference type="SUPFAM" id="SSF52402">
    <property type="entry name" value="Adenine nucleotide alpha hydrolases-like"/>
    <property type="match status" value="1"/>
</dbReference>
<dbReference type="SUPFAM" id="SSF52317">
    <property type="entry name" value="Class I glutamine amidotransferase-like"/>
    <property type="match status" value="1"/>
</dbReference>
<dbReference type="SUPFAM" id="SSF54810">
    <property type="entry name" value="GMP synthetase C-terminal dimerisation domain"/>
    <property type="match status" value="1"/>
</dbReference>
<dbReference type="PROSITE" id="PS51273">
    <property type="entry name" value="GATASE_TYPE_1"/>
    <property type="match status" value="1"/>
</dbReference>
<dbReference type="PROSITE" id="PS51553">
    <property type="entry name" value="GMPS_ATP_PPASE"/>
    <property type="match status" value="1"/>
</dbReference>
<name>GUAA_BURPS</name>
<organism>
    <name type="scientific">Burkholderia pseudomallei (strain K96243)</name>
    <dbReference type="NCBI Taxonomy" id="272560"/>
    <lineage>
        <taxon>Bacteria</taxon>
        <taxon>Pseudomonadati</taxon>
        <taxon>Pseudomonadota</taxon>
        <taxon>Betaproteobacteria</taxon>
        <taxon>Burkholderiales</taxon>
        <taxon>Burkholderiaceae</taxon>
        <taxon>Burkholderia</taxon>
        <taxon>pseudomallei group</taxon>
    </lineage>
</organism>
<gene>
    <name evidence="1" type="primary">guaA</name>
    <name type="ordered locus">BPSL2127</name>
</gene>
<comment type="function">
    <text evidence="1">Catalyzes the synthesis of GMP from XMP.</text>
</comment>
<comment type="catalytic activity">
    <reaction evidence="1">
        <text>XMP + L-glutamine + ATP + H2O = GMP + L-glutamate + AMP + diphosphate + 2 H(+)</text>
        <dbReference type="Rhea" id="RHEA:11680"/>
        <dbReference type="ChEBI" id="CHEBI:15377"/>
        <dbReference type="ChEBI" id="CHEBI:15378"/>
        <dbReference type="ChEBI" id="CHEBI:29985"/>
        <dbReference type="ChEBI" id="CHEBI:30616"/>
        <dbReference type="ChEBI" id="CHEBI:33019"/>
        <dbReference type="ChEBI" id="CHEBI:57464"/>
        <dbReference type="ChEBI" id="CHEBI:58115"/>
        <dbReference type="ChEBI" id="CHEBI:58359"/>
        <dbReference type="ChEBI" id="CHEBI:456215"/>
        <dbReference type="EC" id="6.3.5.2"/>
    </reaction>
</comment>
<comment type="pathway">
    <text evidence="1">Purine metabolism; GMP biosynthesis; GMP from XMP (L-Gln route): step 1/1.</text>
</comment>
<comment type="subunit">
    <text evidence="1">Homodimer.</text>
</comment>
<sequence length="547" mass="60174">MFLSPSAAMHDKILILDFGSQVTQLIARRVREAHVYCEIHPNDVSDDFVREFAPKGVILSGSHASTYEDHQLRAPQAVWDLGVPVLGICYGMQTMAVQLGGKVEWSDHREFGYAEVRAHGRTRLLDGIQDFATPEGHGMLKVWMSHGDKVGEMPPGFALMASTPSCPIAGMADEARGYYAVQFHPEVTHTVQGRKLLERFVLDIAGAKPDWIMRDHIEEAVARIREQVGDEEVILGLSGGVDSSVAAALIHRAIGDQLTCVFVDHGLLRLNEGKMVLDMFEGRLHAKVVHVDASEQFLGHLAGVADPEHKRKIIGREFVEVFQAEAKKLTNAKWLAQGTIYPDVIESGGAKTKKATTIKSHHNVGGLPETLGLKLLEPLRDLFKDEVRELGVALGLPAEMVYRHPFPGPGLGVRILGEVKRDYAELLRRADAIFIEELCGTLATEQDAAAGLCEPSQVGKSWYDLTSQAFAVFLPVKSVGVMGDGRTYDYVAALRAVQTTDFMTAHWAHLPYALLGRASNRIINEVRGINRVVYDVSGKPPATIEWE</sequence>
<reference key="1">
    <citation type="journal article" date="2004" name="Proc. Natl. Acad. Sci. U.S.A.">
        <title>Genomic plasticity of the causative agent of melioidosis, Burkholderia pseudomallei.</title>
        <authorList>
            <person name="Holden M.T.G."/>
            <person name="Titball R.W."/>
            <person name="Peacock S.J."/>
            <person name="Cerdeno-Tarraga A.-M."/>
            <person name="Atkins T."/>
            <person name="Crossman L.C."/>
            <person name="Pitt T."/>
            <person name="Churcher C."/>
            <person name="Mungall K.L."/>
            <person name="Bentley S.D."/>
            <person name="Sebaihia M."/>
            <person name="Thomson N.R."/>
            <person name="Bason N."/>
            <person name="Beacham I.R."/>
            <person name="Brooks K."/>
            <person name="Brown K.A."/>
            <person name="Brown N.F."/>
            <person name="Challis G.L."/>
            <person name="Cherevach I."/>
            <person name="Chillingworth T."/>
            <person name="Cronin A."/>
            <person name="Crossett B."/>
            <person name="Davis P."/>
            <person name="DeShazer D."/>
            <person name="Feltwell T."/>
            <person name="Fraser A."/>
            <person name="Hance Z."/>
            <person name="Hauser H."/>
            <person name="Holroyd S."/>
            <person name="Jagels K."/>
            <person name="Keith K.E."/>
            <person name="Maddison M."/>
            <person name="Moule S."/>
            <person name="Price C."/>
            <person name="Quail M.A."/>
            <person name="Rabbinowitsch E."/>
            <person name="Rutherford K."/>
            <person name="Sanders M."/>
            <person name="Simmonds M."/>
            <person name="Songsivilai S."/>
            <person name="Stevens K."/>
            <person name="Tumapa S."/>
            <person name="Vesaratchavest M."/>
            <person name="Whitehead S."/>
            <person name="Yeats C."/>
            <person name="Barrell B.G."/>
            <person name="Oyston P.C.F."/>
            <person name="Parkhill J."/>
        </authorList>
    </citation>
    <scope>NUCLEOTIDE SEQUENCE [LARGE SCALE GENOMIC DNA]</scope>
    <source>
        <strain>K96243</strain>
    </source>
</reference>
<protein>
    <recommendedName>
        <fullName evidence="1">GMP synthase [glutamine-hydrolyzing]</fullName>
        <ecNumber evidence="1">6.3.5.2</ecNumber>
    </recommendedName>
    <alternativeName>
        <fullName evidence="1">GMP synthetase</fullName>
    </alternativeName>
    <alternativeName>
        <fullName evidence="1">Glutamine amidotransferase</fullName>
    </alternativeName>
</protein>
<evidence type="ECO:0000255" key="1">
    <source>
        <dbReference type="HAMAP-Rule" id="MF_00344"/>
    </source>
</evidence>